<name>CAP6_ADECC</name>
<sequence>MDAVNFSILAPRYGSHPMMSAWSGIGTSDMNGGAFNWGGIWSGIKNFGSNVKNWGSRAWNSQTGKLLRQKLNDTKVREKLVEGISTGVHGALDIANQEIAKQIERRLERHEPLEPEVEEETVETKSEAKAPLVVEMPLKRPRDEDLVITADEPPSYEETIKTMAPLVPMTRPHPSMARPVIADRPTTLELKPSDQPPPYSPQSSNMPVTAPVRSRGWQGTLANIVGVGLSNVKRRRCF</sequence>
<evidence type="ECO:0000255" key="1">
    <source>
        <dbReference type="HAMAP-Rule" id="MF_04048"/>
    </source>
</evidence>
<evidence type="ECO:0000256" key="2">
    <source>
        <dbReference type="SAM" id="MobiDB-lite"/>
    </source>
</evidence>
<comment type="function">
    <molecule>Pre-protein VI</molecule>
    <text evidence="1">During virus assembly, promotes hexon trimers nuclear import through nuclear pore complexes via an importin alpha/beta-dependent mechanism. By analogy to herpesviruses capsid assembly, might act as a chaperone to promote the formation of the icosahedral capsid.</text>
</comment>
<comment type="function">
    <molecule>Endosome lysis protein</molecule>
    <text evidence="1">Structural component of the virion that provides increased stability to the particle shell through its interaction with the core-capsid bridging protein and the hexon-linking protein VIII. Fibers shedding during virus entry into host cell allows the endosome lysis protein to be exposed as a membrane-lytic peptide. Exhibits pH-independent membrane fragmentation activity and probably mediates viral rapid escape from host endosome via organellar membrane lysis. It is not clear if it then remains partially associated with the capsid and involved in the intracellular microtubule-dependent transport of capsid to the nucleus, or if it is lost during endosomal penetration.</text>
</comment>
<comment type="function">
    <molecule>Protease cofactor</molecule>
    <text evidence="1">Cofactor that activates the viral protease. Binds to viral protease in a 1:1 ratio.</text>
</comment>
<comment type="subunit">
    <molecule>Pre-protein VI</molecule>
    <text evidence="1">Interacts with hexon protein; this interaction allows nuclear import of hexon trimers and possibly pre-capsid assembly. Interacts (via C-terminal NLS) with importin alpha/beta.</text>
</comment>
<comment type="subunit">
    <molecule>Endosome lysis protein</molecule>
    <text evidence="1">Interacts (via PPxY motif) with host NEDD4 ubiquitine ligase; this interaction might play a role in virus intracellular transport during entry. Part of a complex composed of the core-capsid bridging protein, the endosome lysis protein VI and the hexon-linking protein VIII; these interactions bridge the virus core to the capsid. Interacts with peripentonal hexons; this interaction stabilizes the capsid by gluing two peripentonal hexons together and joining them with an adjacent group-of-nine hexon.</text>
</comment>
<comment type="subunit">
    <molecule>Protease cofactor</molecule>
    <text evidence="1">Heterodimer with the viral protease; disulfide-linked. Interacts with the viral protease.</text>
</comment>
<comment type="subcellular location">
    <molecule>Pre-protein VI</molecule>
    <subcellularLocation>
        <location evidence="1">Host nucleus</location>
    </subcellularLocation>
    <subcellularLocation>
        <location evidence="1">Host cytoplasm</location>
    </subcellularLocation>
    <text evidence="1">Shuttles between host cytoplasm and nucleus.</text>
</comment>
<comment type="subcellular location">
    <molecule>Endosome lysis protein</molecule>
    <subcellularLocation>
        <location evidence="1">Virion</location>
    </subcellularLocation>
    <text evidence="1">Associates with the base of each peripentonal hexon on the capsid interior. Present in around 360 copies per virion.</text>
</comment>
<comment type="induction">
    <text evidence="1">Expressed in the late phase of the viral replicative cycle.</text>
</comment>
<comment type="domain">
    <text evidence="1">N-terminal amphipathic alpha-helix domain is essential for the membrane lytic activity.</text>
</comment>
<comment type="domain">
    <text evidence="1">Late-budding domains (L domains) are short sequence motifs essential for viral particle release. They can occur individually or in close proximity within structural proteins. They interacts with sorting cellular proteins of the multivesicular body (MVB) pathway. Most of these proteins are class E vacuolar protein sorting factors belonging to ESCRT-I, ESCRT-II or ESCRT-III complexes. Minor capsid protein 6 contains one L domain: a PPXY motif which binds to the WW domains of HECT (homologous to E6-AP C-terminus) E3 ubiquitin ligases, like NEDD4. In adenoviruses, this motif seems to play a role in microtubule-dependent intracellular trafficking toward the nucleus during virus entry into host cell and in suppression of DAXX-mediated repression of the immediate early E1A promoter.</text>
</comment>
<comment type="PTM">
    <text evidence="1">Ubiquitinated by Nedd4 following partial capsid disassembly; which might play a role in intracellular virus movement during entry.</text>
</comment>
<comment type="PTM">
    <molecule>Protease cofactor</molecule>
    <text evidence="1">Contains the major nuclear import and export signals. Proteolytically removed during virion maturation. The processing of the C-terminus turns the precursor into a mature viral structural protein and abrogates its ability to promote hexon import and act as a potential chaperone protein.</text>
</comment>
<comment type="miscellaneous">
    <text evidence="1">All late proteins expressed from the major late promoter are produced by alternative splicing and alternative polyadenylation of the same gene giving rise to non-overlapping ORFs. A leader sequence is present in the N-terminus of all these mRNAs and is recognized by the viral shutoff protein to provide expression although conventional translation via ribosome scanning from the cap has been shut off in the host cell.</text>
</comment>
<comment type="similarity">
    <text evidence="1">Belongs to the adenoviridae protein VI family.</text>
</comment>
<organism>
    <name type="scientific">Canine adenovirus serotype 1 (strain CLL)</name>
    <name type="common">CAdV-1</name>
    <name type="synonym">Canine adenovirus 1 (strain CLL)</name>
    <dbReference type="NCBI Taxonomy" id="69150"/>
    <lineage>
        <taxon>Viruses</taxon>
        <taxon>Varidnaviria</taxon>
        <taxon>Bamfordvirae</taxon>
        <taxon>Preplasmiviricota</taxon>
        <taxon>Tectiliviricetes</taxon>
        <taxon>Rowavirales</taxon>
        <taxon>Adenoviridae</taxon>
        <taxon>Mastadenovirus</taxon>
        <taxon>Canine mastadenovirus A</taxon>
    </lineage>
</organism>
<proteinExistence type="inferred from homology"/>
<dbReference type="EMBL" id="U55001">
    <property type="protein sequence ID" value="AAB05442.1"/>
    <property type="molecule type" value="Genomic_DNA"/>
</dbReference>
<dbReference type="GO" id="GO:0043657">
    <property type="term" value="C:host cell"/>
    <property type="evidence" value="ECO:0007669"/>
    <property type="project" value="GOC"/>
</dbReference>
<dbReference type="GO" id="GO:0030430">
    <property type="term" value="C:host cell cytoplasm"/>
    <property type="evidence" value="ECO:0007669"/>
    <property type="project" value="UniProtKB-SubCell"/>
</dbReference>
<dbReference type="GO" id="GO:0042025">
    <property type="term" value="C:host cell nucleus"/>
    <property type="evidence" value="ECO:0007669"/>
    <property type="project" value="UniProtKB-SubCell"/>
</dbReference>
<dbReference type="GO" id="GO:0019028">
    <property type="term" value="C:viral capsid"/>
    <property type="evidence" value="ECO:0007669"/>
    <property type="project" value="UniProtKB-UniRule"/>
</dbReference>
<dbReference type="GO" id="GO:0046729">
    <property type="term" value="C:viral procapsid"/>
    <property type="evidence" value="ECO:0007669"/>
    <property type="project" value="UniProtKB-UniRule"/>
</dbReference>
<dbReference type="GO" id="GO:0039664">
    <property type="term" value="P:lysis of host organelle involved in viral entry into host cell"/>
    <property type="evidence" value="ECO:0007669"/>
    <property type="project" value="UniProtKB-UniRule"/>
</dbReference>
<dbReference type="GO" id="GO:0075521">
    <property type="term" value="P:microtubule-dependent intracellular transport of viral material towards nucleus"/>
    <property type="evidence" value="ECO:0007669"/>
    <property type="project" value="UniProtKB-UniRule"/>
</dbReference>
<dbReference type="GO" id="GO:0019076">
    <property type="term" value="P:viral release from host cell"/>
    <property type="evidence" value="ECO:0007669"/>
    <property type="project" value="UniProtKB-UniRule"/>
</dbReference>
<dbReference type="HAMAP" id="MF_04048">
    <property type="entry name" value="ADV_CAP6"/>
    <property type="match status" value="1"/>
</dbReference>
<dbReference type="InterPro" id="IPR004243">
    <property type="entry name" value="McpVI"/>
</dbReference>
<dbReference type="Pfam" id="PF02993">
    <property type="entry name" value="MCPVI"/>
    <property type="match status" value="1"/>
</dbReference>
<accession>Q65954</accession>
<organismHost>
    <name type="scientific">Canis lupus familiaris</name>
    <name type="common">Dog</name>
    <name type="synonym">Canis familiaris</name>
    <dbReference type="NCBI Taxonomy" id="9615"/>
</organismHost>
<reference key="1">
    <citation type="submission" date="1996-08" db="EMBL/GenBank/DDBJ databases">
        <title>DNA sequence and genomic organization of canine adenovirus type 1.</title>
        <authorList>
            <person name="Campbell J.B."/>
            <person name="Zhao Y."/>
        </authorList>
    </citation>
    <scope>NUCLEOTIDE SEQUENCE [LARGE SCALE GENOMIC DNA]</scope>
</reference>
<keyword id="KW-0167">Capsid protein</keyword>
<keyword id="KW-1176">Cytoplasmic inwards viral transport</keyword>
<keyword id="KW-1015">Disulfide bond</keyword>
<keyword id="KW-1035">Host cytoplasm</keyword>
<keyword id="KW-1048">Host nucleus</keyword>
<keyword id="KW-0945">Host-virus interaction</keyword>
<keyword id="KW-0426">Late protein</keyword>
<keyword id="KW-1177">Microtubular inwards viral transport</keyword>
<keyword id="KW-0597">Phosphoprotein</keyword>
<keyword id="KW-0832">Ubl conjugation</keyword>
<keyword id="KW-0118">Viral capsid assembly</keyword>
<keyword id="KW-1162">Viral penetration into host cytoplasm</keyword>
<keyword id="KW-1174">Viral penetration via lysis of host organellar membrane</keyword>
<keyword id="KW-1188">Viral release from host cell</keyword>
<keyword id="KW-0946">Virion</keyword>
<keyword id="KW-1160">Virus entry into host cell</keyword>
<protein>
    <recommendedName>
        <fullName evidence="1">Pre-protein VI</fullName>
        <shortName evidence="1">pVI</shortName>
    </recommendedName>
    <component>
        <recommendedName>
            <fullName evidence="1">Endosome lysis protein</fullName>
        </recommendedName>
    </component>
    <component>
        <recommendedName>
            <fullName evidence="1">Protease cofactor</fullName>
        </recommendedName>
        <alternativeName>
            <fullName evidence="1">pVI-C</fullName>
        </alternativeName>
    </component>
</protein>
<feature type="chain" id="PRO_0000421430" description="Pre-protein VI" evidence="1">
    <location>
        <begin position="1"/>
        <end position="238"/>
    </location>
</feature>
<feature type="propeptide" id="PRO_0000036560" evidence="1">
    <location>
        <begin position="1"/>
        <end position="33"/>
    </location>
</feature>
<feature type="chain" id="PRO_0000036561" description="Endosome lysis protein" evidence="1">
    <location>
        <begin position="34"/>
        <end position="227"/>
    </location>
</feature>
<feature type="chain" id="PRO_0000036562" description="Protease cofactor" evidence="1">
    <location>
        <begin position="228"/>
        <end position="238"/>
    </location>
</feature>
<feature type="region of interest" description="Amphipathic alpha-helix essential for membrane lytic activity" evidence="1">
    <location>
        <begin position="34"/>
        <end position="54"/>
    </location>
</feature>
<feature type="region of interest" description="Involved in endosomal membrane lysis" evidence="1">
    <location>
        <begin position="36"/>
        <end position="53"/>
    </location>
</feature>
<feature type="region of interest" description="Interaction with hexon protein" evidence="1">
    <location>
        <begin position="48"/>
        <end position="74"/>
    </location>
</feature>
<feature type="region of interest" description="Disordered" evidence="2">
    <location>
        <begin position="187"/>
        <end position="212"/>
    </location>
</feature>
<feature type="region of interest" description="Interaction with hexon protein" evidence="1">
    <location>
        <begin position="221"/>
        <end position="227"/>
    </location>
</feature>
<feature type="region of interest" description="Binds to importin alpha/beta, involved in hexon nuclear import" evidence="1">
    <location>
        <begin position="228"/>
        <end position="238"/>
    </location>
</feature>
<feature type="short sequence motif" description="Nuclear export signal" evidence="1">
    <location>
        <begin position="67"/>
        <end position="76"/>
    </location>
</feature>
<feature type="short sequence motif" description="PPXY motif" evidence="1">
    <location>
        <begin position="153"/>
        <end position="156"/>
    </location>
</feature>
<feature type="short sequence motif" description="Nuclear export signal" evidence="1">
    <location>
        <begin position="219"/>
        <end position="230"/>
    </location>
</feature>
<feature type="short sequence motif" description="Nuclear localization signal" evidence="1">
    <location>
        <begin position="233"/>
        <end position="236"/>
    </location>
</feature>
<feature type="site" description="Cleavage; by viral protease" evidence="1">
    <location>
        <begin position="33"/>
        <end position="34"/>
    </location>
</feature>
<feature type="site" description="Cleavage; by viral protease" evidence="1">
    <location>
        <begin position="227"/>
        <end position="228"/>
    </location>
</feature>
<feature type="disulfide bond" description="Interchain (with Adenovirus protease)" evidence="1">
    <location>
        <position position="237"/>
    </location>
</feature>
<gene>
    <name evidence="1" type="primary">L3</name>
</gene>